<sequence length="87" mass="9178">ADLANGAKVFSGNCAACHMGGGNVVMANKTLKKEALEQFGMYSEDAIIYQVQHGKNAMPAFAGRLTDEQIQDVAAYVLDQAAKGWAG</sequence>
<evidence type="ECO:0000250" key="1"/>
<evidence type="ECO:0000255" key="2">
    <source>
        <dbReference type="HAMAP-Rule" id="MF_00594"/>
    </source>
</evidence>
<evidence type="ECO:0000269" key="3">
    <source>
    </source>
</evidence>
<evidence type="ECO:0000305" key="4"/>
<evidence type="ECO:0000305" key="5">
    <source>
    </source>
</evidence>
<evidence type="ECO:0007829" key="6">
    <source>
        <dbReference type="PDB" id="1C6S"/>
    </source>
</evidence>
<reference key="1">
    <citation type="journal article" date="1998" name="EMBO J.">
        <title>Solution structure of cytochrome c6 from the thermophilic cyanobacterium Synechococcus elongatus.</title>
        <authorList>
            <person name="Beissinger M."/>
            <person name="Sticht H."/>
            <person name="Sutter M."/>
            <person name="Ejchart A."/>
            <person name="Haehnel W."/>
            <person name="Roesch P."/>
        </authorList>
    </citation>
    <scope>STRUCTURE BY NMR IN COMPLEX WITH HEME</scope>
    <scope>COFACTOR</scope>
</reference>
<comment type="function">
    <text evidence="4">Functions as an electron carrier between membrane-bound cytochrome b6-f and photosystem I in oxygenic photosynthesis.</text>
</comment>
<comment type="subunit">
    <text evidence="1">Monomer.</text>
</comment>
<comment type="subcellular location">
    <subcellularLocation>
        <location evidence="4">Cellular thylakoid lumen</location>
    </subcellularLocation>
</comment>
<comment type="PTM">
    <text evidence="3">Binds 1 heme c group covalently per subunit.</text>
</comment>
<comment type="similarity">
    <text evidence="4">Belongs to the cytochrome c family. PetJ subfamily.</text>
</comment>
<protein>
    <recommendedName>
        <fullName>Cytochrome c6</fullName>
    </recommendedName>
    <alternativeName>
        <fullName>Cytochrome c-553</fullName>
    </alternativeName>
    <alternativeName>
        <fullName>Cytochrome c553</fullName>
    </alternativeName>
    <alternativeName>
        <fullName>Soluble cytochrome f</fullName>
    </alternativeName>
</protein>
<accession>P0A3Y0</accession>
<accession>P56534</accession>
<accession>Q9F1M0</accession>
<name>CYC6_SYNEL</name>
<feature type="chain" id="PRO_0000208687" description="Cytochrome c6">
    <location>
        <begin position="1"/>
        <end position="87"/>
    </location>
</feature>
<feature type="binding site" description="covalent" evidence="3">
    <location>
        <position position="14"/>
    </location>
    <ligand>
        <name>heme c</name>
        <dbReference type="ChEBI" id="CHEBI:61717"/>
    </ligand>
</feature>
<feature type="binding site" description="covalent" evidence="3">
    <location>
        <position position="17"/>
    </location>
    <ligand>
        <name>heme c</name>
        <dbReference type="ChEBI" id="CHEBI:61717"/>
    </ligand>
</feature>
<feature type="binding site" description="axial binding residue" evidence="2 5">
    <location>
        <position position="18"/>
    </location>
    <ligand>
        <name>heme c</name>
        <dbReference type="ChEBI" id="CHEBI:61717"/>
    </ligand>
    <ligandPart>
        <name>Fe</name>
        <dbReference type="ChEBI" id="CHEBI:18248"/>
    </ligandPart>
</feature>
<feature type="binding site" description="axial binding residue" evidence="2 5">
    <location>
        <position position="58"/>
    </location>
    <ligand>
        <name>heme c</name>
        <dbReference type="ChEBI" id="CHEBI:61717"/>
    </ligand>
    <ligandPart>
        <name>Fe</name>
        <dbReference type="ChEBI" id="CHEBI:18248"/>
    </ligandPart>
</feature>
<feature type="helix" evidence="6">
    <location>
        <begin position="3"/>
        <end position="10"/>
    </location>
</feature>
<feature type="turn" evidence="6">
    <location>
        <begin position="11"/>
        <end position="13"/>
    </location>
</feature>
<feature type="helix" evidence="6">
    <location>
        <begin position="14"/>
        <end position="17"/>
    </location>
</feature>
<feature type="turn" evidence="6">
    <location>
        <begin position="19"/>
        <end position="21"/>
    </location>
</feature>
<feature type="strand" evidence="6">
    <location>
        <begin position="24"/>
        <end position="28"/>
    </location>
</feature>
<feature type="strand" evidence="6">
    <location>
        <begin position="31"/>
        <end position="33"/>
    </location>
</feature>
<feature type="turn" evidence="6">
    <location>
        <begin position="34"/>
        <end position="38"/>
    </location>
</feature>
<feature type="helix" evidence="6">
    <location>
        <begin position="44"/>
        <end position="51"/>
    </location>
</feature>
<feature type="turn" evidence="6">
    <location>
        <begin position="62"/>
        <end position="64"/>
    </location>
</feature>
<feature type="helix" evidence="6">
    <location>
        <begin position="68"/>
        <end position="80"/>
    </location>
</feature>
<gene>
    <name type="primary">petJ</name>
</gene>
<dbReference type="PDB" id="1C6S">
    <property type="method" value="NMR"/>
    <property type="chains" value="A=1-87"/>
</dbReference>
<dbReference type="PDBsum" id="1C6S"/>
<dbReference type="SMR" id="P0A3Y0"/>
<dbReference type="EvolutionaryTrace" id="P0A3Y0"/>
<dbReference type="GO" id="GO:0031979">
    <property type="term" value="C:plasma membrane-derived thylakoid lumen"/>
    <property type="evidence" value="ECO:0007669"/>
    <property type="project" value="UniProtKB-SubCell"/>
</dbReference>
<dbReference type="GO" id="GO:0009055">
    <property type="term" value="F:electron transfer activity"/>
    <property type="evidence" value="ECO:0007669"/>
    <property type="project" value="UniProtKB-UniRule"/>
</dbReference>
<dbReference type="GO" id="GO:0020037">
    <property type="term" value="F:heme binding"/>
    <property type="evidence" value="ECO:0007669"/>
    <property type="project" value="InterPro"/>
</dbReference>
<dbReference type="GO" id="GO:0005506">
    <property type="term" value="F:iron ion binding"/>
    <property type="evidence" value="ECO:0007669"/>
    <property type="project" value="InterPro"/>
</dbReference>
<dbReference type="GO" id="GO:0015979">
    <property type="term" value="P:photosynthesis"/>
    <property type="evidence" value="ECO:0007669"/>
    <property type="project" value="UniProtKB-UniRule"/>
</dbReference>
<dbReference type="FunFam" id="1.10.760.10:FF:000038">
    <property type="entry name" value="Cytochrome c6"/>
    <property type="match status" value="1"/>
</dbReference>
<dbReference type="Gene3D" id="1.10.760.10">
    <property type="entry name" value="Cytochrome c-like domain"/>
    <property type="match status" value="1"/>
</dbReference>
<dbReference type="HAMAP" id="MF_00594">
    <property type="entry name" value="Cytc_PetJ"/>
    <property type="match status" value="1"/>
</dbReference>
<dbReference type="InterPro" id="IPR009056">
    <property type="entry name" value="Cyt_c-like_dom"/>
</dbReference>
<dbReference type="InterPro" id="IPR036909">
    <property type="entry name" value="Cyt_c-like_dom_sf"/>
</dbReference>
<dbReference type="InterPro" id="IPR023655">
    <property type="entry name" value="Cyt_C6"/>
</dbReference>
<dbReference type="InterPro" id="IPR008168">
    <property type="entry name" value="Cyt_C_IC"/>
</dbReference>
<dbReference type="NCBIfam" id="NF045930">
    <property type="entry name" value="Cytc6PetJCyano"/>
    <property type="match status" value="1"/>
</dbReference>
<dbReference type="PANTHER" id="PTHR34688">
    <property type="entry name" value="CYTOCHROME C6, CHLOROPLASTIC"/>
    <property type="match status" value="1"/>
</dbReference>
<dbReference type="PANTHER" id="PTHR34688:SF2">
    <property type="entry name" value="CYTOCHROME C6, CHLOROPLASTIC"/>
    <property type="match status" value="1"/>
</dbReference>
<dbReference type="Pfam" id="PF13442">
    <property type="entry name" value="Cytochrome_CBB3"/>
    <property type="match status" value="1"/>
</dbReference>
<dbReference type="PRINTS" id="PR00605">
    <property type="entry name" value="CYTCHROMECIC"/>
</dbReference>
<dbReference type="SUPFAM" id="SSF46626">
    <property type="entry name" value="Cytochrome c"/>
    <property type="match status" value="1"/>
</dbReference>
<dbReference type="PROSITE" id="PS51007">
    <property type="entry name" value="CYTC"/>
    <property type="match status" value="1"/>
</dbReference>
<proteinExistence type="evidence at protein level"/>
<keyword id="KW-0002">3D-structure</keyword>
<keyword id="KW-0249">Electron transport</keyword>
<keyword id="KW-0349">Heme</keyword>
<keyword id="KW-0408">Iron</keyword>
<keyword id="KW-0479">Metal-binding</keyword>
<keyword id="KW-0602">Photosynthesis</keyword>
<keyword id="KW-0793">Thylakoid</keyword>
<keyword id="KW-0813">Transport</keyword>
<organism>
    <name type="scientific">Synechococcus elongatus</name>
    <dbReference type="NCBI Taxonomy" id="32046"/>
    <lineage>
        <taxon>Bacteria</taxon>
        <taxon>Bacillati</taxon>
        <taxon>Cyanobacteriota</taxon>
        <taxon>Cyanophyceae</taxon>
        <taxon>Synechococcales</taxon>
        <taxon>Synechococcaceae</taxon>
        <taxon>Synechococcus</taxon>
    </lineage>
</organism>